<comment type="function">
    <text evidence="1">Component of the PAF1 complex which is a multifunctional complex involved in transcription initiation via genetic interactions with TATA-binding proteins, elongation and transcription-coupled histone modification.</text>
</comment>
<comment type="subunit">
    <text evidence="1">Component of the PAF1 complex which consists of at least cdc-73, ctr-9, leo-1, pafo-1 and rtfo-1.</text>
</comment>
<comment type="subcellular location">
    <subcellularLocation>
        <location evidence="4">Nucleus</location>
    </subcellularLocation>
    <text evidence="5">Nuclear localization depends on pafo-1, leo-1 and ctr-9.</text>
</comment>
<comment type="disruption phenotype">
    <text evidence="4">RNAi mediated knock-down is embryonic lethal. Embryogenesis proceeds more slowly, with embryos displaying defects in the positioning and shape of epidermal cells. 60% of embryos arrest at the bean stage of embryogenesis without any significant change in body shape. Nuclear localization of rtf-1 is unaffected.</text>
</comment>
<comment type="similarity">
    <text evidence="2">Belongs to the CDC73 family.</text>
</comment>
<name>CDC73_CAEEL</name>
<dbReference type="EMBL" id="FO081297">
    <property type="protein sequence ID" value="CCD70582.2"/>
    <property type="molecule type" value="Genomic_DNA"/>
</dbReference>
<dbReference type="RefSeq" id="NP_500465.4">
    <property type="nucleotide sequence ID" value="NM_068064.6"/>
</dbReference>
<dbReference type="SMR" id="Q9N5U5"/>
<dbReference type="ComplexPortal" id="CPX-966">
    <property type="entry name" value="PAF1 complex"/>
</dbReference>
<dbReference type="DIP" id="DIP-25821N"/>
<dbReference type="FunCoup" id="Q9N5U5">
    <property type="interactions" value="3390"/>
</dbReference>
<dbReference type="STRING" id="6239.F35F11.1.1"/>
<dbReference type="PaxDb" id="6239-F35F11.1"/>
<dbReference type="PeptideAtlas" id="Q9N5U5"/>
<dbReference type="EnsemblMetazoa" id="F35F11.1.1">
    <property type="protein sequence ID" value="F35F11.1.1"/>
    <property type="gene ID" value="WBGene00018064"/>
</dbReference>
<dbReference type="GeneID" id="177160"/>
<dbReference type="KEGG" id="cel:CELE_F35F11.1"/>
<dbReference type="UCSC" id="F35F11.1">
    <property type="organism name" value="c. elegans"/>
</dbReference>
<dbReference type="AGR" id="WB:WBGene00018064"/>
<dbReference type="CTD" id="177160"/>
<dbReference type="WormBase" id="F35F11.1">
    <property type="protein sequence ID" value="CE48035"/>
    <property type="gene ID" value="WBGene00018064"/>
    <property type="gene designation" value="cdc-73"/>
</dbReference>
<dbReference type="eggNOG" id="KOG3786">
    <property type="taxonomic scope" value="Eukaryota"/>
</dbReference>
<dbReference type="GeneTree" id="ENSGT00390000001114"/>
<dbReference type="HOGENOM" id="CLU_025849_0_1_1"/>
<dbReference type="InParanoid" id="Q9N5U5"/>
<dbReference type="OMA" id="CAFHLKY"/>
<dbReference type="OrthoDB" id="2186602at2759"/>
<dbReference type="PhylomeDB" id="Q9N5U5"/>
<dbReference type="Reactome" id="R-CEL-112382">
    <property type="pathway name" value="Formation of RNA Pol II elongation complex"/>
</dbReference>
<dbReference type="Reactome" id="R-CEL-201722">
    <property type="pathway name" value="Formation of the beta-catenin:TCF transactivating complex"/>
</dbReference>
<dbReference type="Reactome" id="R-CEL-674695">
    <property type="pathway name" value="RNA Polymerase II Pre-transcription Events"/>
</dbReference>
<dbReference type="Reactome" id="R-CEL-75955">
    <property type="pathway name" value="RNA Polymerase II Transcription Elongation"/>
</dbReference>
<dbReference type="PRO" id="PR:Q9N5U5"/>
<dbReference type="Proteomes" id="UP000001940">
    <property type="component" value="Chromosome IV"/>
</dbReference>
<dbReference type="Bgee" id="WBGene00018064">
    <property type="expression patterns" value="Expressed in germ line (C elegans) and 4 other cell types or tissues"/>
</dbReference>
<dbReference type="GO" id="GO:0016593">
    <property type="term" value="C:Cdc73/Paf1 complex"/>
    <property type="evidence" value="ECO:0000318"/>
    <property type="project" value="GO_Central"/>
</dbReference>
<dbReference type="GO" id="GO:0005634">
    <property type="term" value="C:nucleus"/>
    <property type="evidence" value="ECO:0000303"/>
    <property type="project" value="ComplexPortal"/>
</dbReference>
<dbReference type="GO" id="GO:0000993">
    <property type="term" value="F:RNA polymerase II complex binding"/>
    <property type="evidence" value="ECO:0000318"/>
    <property type="project" value="GO_Central"/>
</dbReference>
<dbReference type="GO" id="GO:0032968">
    <property type="term" value="P:positive regulation of transcription elongation by RNA polymerase II"/>
    <property type="evidence" value="ECO:0000318"/>
    <property type="project" value="GO_Central"/>
</dbReference>
<dbReference type="GO" id="GO:0006368">
    <property type="term" value="P:transcription elongation by RNA polymerase II"/>
    <property type="evidence" value="ECO:0000303"/>
    <property type="project" value="ComplexPortal"/>
</dbReference>
<dbReference type="FunFam" id="3.40.50.11990:FF:000002">
    <property type="entry name" value="protein CDC73 homolog"/>
    <property type="match status" value="1"/>
</dbReference>
<dbReference type="Gene3D" id="3.40.50.11990">
    <property type="entry name" value="RNA polymerase II accessory factor, Cdc73 C-terminal domain"/>
    <property type="match status" value="1"/>
</dbReference>
<dbReference type="InterPro" id="IPR007852">
    <property type="entry name" value="Cdc73/Parafibromin"/>
</dbReference>
<dbReference type="InterPro" id="IPR031336">
    <property type="entry name" value="CDC73_C"/>
</dbReference>
<dbReference type="InterPro" id="IPR038103">
    <property type="entry name" value="CDC73_C_sf"/>
</dbReference>
<dbReference type="InterPro" id="IPR032041">
    <property type="entry name" value="Cdc73_N"/>
</dbReference>
<dbReference type="PANTHER" id="PTHR12466">
    <property type="entry name" value="CDC73 DOMAIN PROTEIN"/>
    <property type="match status" value="1"/>
</dbReference>
<dbReference type="PANTHER" id="PTHR12466:SF8">
    <property type="entry name" value="PARAFIBROMIN"/>
    <property type="match status" value="1"/>
</dbReference>
<dbReference type="Pfam" id="PF05179">
    <property type="entry name" value="CDC73_C"/>
    <property type="match status" value="1"/>
</dbReference>
<dbReference type="Pfam" id="PF16050">
    <property type="entry name" value="CDC73_N"/>
    <property type="match status" value="1"/>
</dbReference>
<proteinExistence type="inferred from homology"/>
<keyword id="KW-0010">Activator</keyword>
<keyword id="KW-0539">Nucleus</keyword>
<keyword id="KW-1185">Reference proteome</keyword>
<keyword id="KW-0804">Transcription</keyword>
<keyword id="KW-0805">Transcription regulation</keyword>
<protein>
    <recommendedName>
        <fullName evidence="1">Cell division cycle protein 73</fullName>
    </recommendedName>
    <alternativeName>
        <fullName evidence="1">RNA polymerase-associated protein CDC73</fullName>
    </alternativeName>
</protein>
<feature type="chain" id="PRO_0000431511" description="Cell division cycle protein 73">
    <location>
        <begin position="1"/>
        <end position="517"/>
    </location>
</feature>
<feature type="region of interest" description="Disordered" evidence="3">
    <location>
        <begin position="124"/>
        <end position="159"/>
    </location>
</feature>
<feature type="region of interest" description="Disordered" evidence="3">
    <location>
        <begin position="306"/>
        <end position="326"/>
    </location>
</feature>
<feature type="compositionally biased region" description="Basic and acidic residues" evidence="3">
    <location>
        <begin position="124"/>
        <end position="135"/>
    </location>
</feature>
<feature type="compositionally biased region" description="Pro residues" evidence="3">
    <location>
        <begin position="315"/>
        <end position="324"/>
    </location>
</feature>
<reference evidence="8" key="1">
    <citation type="journal article" date="1998" name="Science">
        <title>Genome sequence of the nematode C. elegans: a platform for investigating biology.</title>
        <authorList>
            <consortium name="The C. elegans sequencing consortium"/>
        </authorList>
    </citation>
    <scope>NUCLEOTIDE SEQUENCE [LARGE SCALE GENOMIC DNA]</scope>
    <source>
        <strain evidence="8">Bristol N2</strain>
    </source>
</reference>
<reference evidence="6" key="2">
    <citation type="journal article" date="2014" name="Dev. Biol.">
        <title>The PAF1 complex is involved in embryonic epidermal morphogenesis in Caenorhabditis elegans.</title>
        <authorList>
            <person name="Kubota Y."/>
            <person name="Tsuyama K."/>
            <person name="Takabayashi Y."/>
            <person name="Haruta N."/>
            <person name="Maruyama R."/>
            <person name="Iida N."/>
            <person name="Sugimoto A."/>
        </authorList>
    </citation>
    <scope>SUBCELLULAR LOCATION</scope>
    <scope>DISRUPTION PHENOTYPE</scope>
</reference>
<evidence type="ECO:0000250" key="1">
    <source>
        <dbReference type="UniProtKB" id="Q06697"/>
    </source>
</evidence>
<evidence type="ECO:0000255" key="2"/>
<evidence type="ECO:0000256" key="3">
    <source>
        <dbReference type="SAM" id="MobiDB-lite"/>
    </source>
</evidence>
<evidence type="ECO:0000269" key="4">
    <source>
    </source>
</evidence>
<evidence type="ECO:0000303" key="5">
    <source>
    </source>
</evidence>
<evidence type="ECO:0000305" key="6"/>
<evidence type="ECO:0000312" key="7">
    <source>
        <dbReference type="EMBL" id="CCD70582.2"/>
    </source>
</evidence>
<evidence type="ECO:0000312" key="8">
    <source>
        <dbReference type="Proteomes" id="UP000001940"/>
    </source>
</evidence>
<evidence type="ECO:0000312" key="9">
    <source>
        <dbReference type="WormBase" id="F35F11.1"/>
    </source>
</evidence>
<sequence>MDPLEALQKHVQRPEEFPLREVTVSGISYVAFGDYAYKKDTETSLQIYGKSDEFYSLESLVVFLKYSHENHGVYVKEAAAAGVRAVTRIDRKNVTEYLQGDRTDFPALMNQVNPLSLRQLLHSSEPEAKKPRLDGEAAGEPMDTSTSDEPQESAVSAAKKEVEIRALNDNLTKDRIAEMRRKRQSHREKGIVTIDESLSTLTSASLPKTRIHKTRENVMLGARDLSNVLDIITSAQRQWDLNEKKEKVAAVHATNLSKDQSGAAGGQQQRSGYSRYAQEAFAHEKTKEIQTEGSFIGSNFSSIKQGHHAVQKAPDAPPGRPPLAKPIQLLTSSTATSSGSSAAQNGSKRTSRSPIIIVPSAMNTMINLYNVRDILQNFSYVPVDQRRKETNKKPVDLAIQRQKNGVTYNIRVIDNAEKLANDDWDRVIAVFVMGVAWQFKGWKWNGNPTDIFTHIPAFHFHVDQDKPVAQVMQWNVHKIPVSATKRHMDKARFSQVWETIENFVRKNKPHLTARLGL</sequence>
<organism evidence="7">
    <name type="scientific">Caenorhabditis elegans</name>
    <dbReference type="NCBI Taxonomy" id="6239"/>
    <lineage>
        <taxon>Eukaryota</taxon>
        <taxon>Metazoa</taxon>
        <taxon>Ecdysozoa</taxon>
        <taxon>Nematoda</taxon>
        <taxon>Chromadorea</taxon>
        <taxon>Rhabditida</taxon>
        <taxon>Rhabditina</taxon>
        <taxon>Rhabditomorpha</taxon>
        <taxon>Rhabditoidea</taxon>
        <taxon>Rhabditidae</taxon>
        <taxon>Peloderinae</taxon>
        <taxon>Caenorhabditis</taxon>
    </lineage>
</organism>
<accession>Q9N5U5</accession>
<gene>
    <name evidence="9" type="primary">cdc-73</name>
    <name evidence="9" type="ORF">F35F11.1</name>
</gene>